<comment type="function">
    <text evidence="1">Part of cytochrome c oxidase, its function is unknown.</text>
</comment>
<comment type="catalytic activity">
    <reaction>
        <text>4 Fe(II)-[cytochrome c] + O2 + 8 H(+)(in) = 4 Fe(III)-[cytochrome c] + 2 H2O + 4 H(+)(out)</text>
        <dbReference type="Rhea" id="RHEA:11436"/>
        <dbReference type="Rhea" id="RHEA-COMP:10350"/>
        <dbReference type="Rhea" id="RHEA-COMP:14399"/>
        <dbReference type="ChEBI" id="CHEBI:15377"/>
        <dbReference type="ChEBI" id="CHEBI:15378"/>
        <dbReference type="ChEBI" id="CHEBI:15379"/>
        <dbReference type="ChEBI" id="CHEBI:29033"/>
        <dbReference type="ChEBI" id="CHEBI:29034"/>
        <dbReference type="EC" id="7.1.1.9"/>
    </reaction>
</comment>
<comment type="subunit">
    <text evidence="1">Associates with subunits I, II and III to form cytochrome c oxidase.</text>
</comment>
<comment type="subcellular location">
    <subcellularLocation>
        <location evidence="1">Cell membrane</location>
        <topology evidence="1">Multi-pass membrane protein</topology>
    </subcellularLocation>
</comment>
<comment type="similarity">
    <text evidence="3">Belongs to the cytochrome c oxidase bacterial subunit CtaF family.</text>
</comment>
<evidence type="ECO:0000250" key="1"/>
<evidence type="ECO:0000255" key="2"/>
<evidence type="ECO:0000305" key="3"/>
<name>COX4_MYCLE</name>
<keyword id="KW-1003">Cell membrane</keyword>
<keyword id="KW-0472">Membrane</keyword>
<keyword id="KW-1185">Reference proteome</keyword>
<keyword id="KW-1278">Translocase</keyword>
<keyword id="KW-0812">Transmembrane</keyword>
<keyword id="KW-1133">Transmembrane helix</keyword>
<gene>
    <name type="primary">ctaF</name>
    <name type="ordered locus">ML0876</name>
</gene>
<accession>Q9CCF0</accession>
<feature type="chain" id="PRO_0000220017" description="Probable cytochrome c oxidase polypeptide 4">
    <location>
        <begin position="1"/>
        <end position="139"/>
    </location>
</feature>
<feature type="transmembrane region" description="Helical" evidence="2">
    <location>
        <begin position="10"/>
        <end position="30"/>
    </location>
</feature>
<feature type="transmembrane region" description="Helical" evidence="2">
    <location>
        <begin position="36"/>
        <end position="56"/>
    </location>
</feature>
<feature type="transmembrane region" description="Helical" evidence="2">
    <location>
        <begin position="79"/>
        <end position="99"/>
    </location>
</feature>
<feature type="transmembrane region" description="Helical" evidence="2">
    <location>
        <begin position="101"/>
        <end position="121"/>
    </location>
</feature>
<organism>
    <name type="scientific">Mycobacterium leprae (strain TN)</name>
    <dbReference type="NCBI Taxonomy" id="272631"/>
    <lineage>
        <taxon>Bacteria</taxon>
        <taxon>Bacillati</taxon>
        <taxon>Actinomycetota</taxon>
        <taxon>Actinomycetes</taxon>
        <taxon>Mycobacteriales</taxon>
        <taxon>Mycobacteriaceae</taxon>
        <taxon>Mycobacterium</taxon>
    </lineage>
</organism>
<reference key="1">
    <citation type="journal article" date="2001" name="Nature">
        <title>Massive gene decay in the leprosy bacillus.</title>
        <authorList>
            <person name="Cole S.T."/>
            <person name="Eiglmeier K."/>
            <person name="Parkhill J."/>
            <person name="James K.D."/>
            <person name="Thomson N.R."/>
            <person name="Wheeler P.R."/>
            <person name="Honore N."/>
            <person name="Garnier T."/>
            <person name="Churcher C.M."/>
            <person name="Harris D.E."/>
            <person name="Mungall K.L."/>
            <person name="Basham D."/>
            <person name="Brown D."/>
            <person name="Chillingworth T."/>
            <person name="Connor R."/>
            <person name="Davies R.M."/>
            <person name="Devlin K."/>
            <person name="Duthoy S."/>
            <person name="Feltwell T."/>
            <person name="Fraser A."/>
            <person name="Hamlin N."/>
            <person name="Holroyd S."/>
            <person name="Hornsby T."/>
            <person name="Jagels K."/>
            <person name="Lacroix C."/>
            <person name="Maclean J."/>
            <person name="Moule S."/>
            <person name="Murphy L.D."/>
            <person name="Oliver K."/>
            <person name="Quail M.A."/>
            <person name="Rajandream M.A."/>
            <person name="Rutherford K.M."/>
            <person name="Rutter S."/>
            <person name="Seeger K."/>
            <person name="Simon S."/>
            <person name="Simmonds M."/>
            <person name="Skelton J."/>
            <person name="Squares R."/>
            <person name="Squares S."/>
            <person name="Stevens K."/>
            <person name="Taylor K."/>
            <person name="Whitehead S."/>
            <person name="Woodward J.R."/>
            <person name="Barrell B.G."/>
        </authorList>
    </citation>
    <scope>NUCLEOTIDE SEQUENCE [LARGE SCALE GENOMIC DNA]</scope>
    <source>
        <strain>TN</strain>
    </source>
</reference>
<dbReference type="EC" id="7.1.1.9"/>
<dbReference type="EMBL" id="AL583920">
    <property type="protein sequence ID" value="CAC31257.1"/>
    <property type="molecule type" value="Genomic_DNA"/>
</dbReference>
<dbReference type="PIR" id="F87018">
    <property type="entry name" value="F87018"/>
</dbReference>
<dbReference type="RefSeq" id="NP_301662.1">
    <property type="nucleotide sequence ID" value="NC_002677.1"/>
</dbReference>
<dbReference type="RefSeq" id="WP_010907986.1">
    <property type="nucleotide sequence ID" value="NC_002677.1"/>
</dbReference>
<dbReference type="SMR" id="Q9CCF0"/>
<dbReference type="STRING" id="272631.gene:17574702"/>
<dbReference type="KEGG" id="mle:ML0876"/>
<dbReference type="PATRIC" id="fig|272631.5.peg.1606"/>
<dbReference type="Leproma" id="ML0876"/>
<dbReference type="eggNOG" id="ENOG5032TTI">
    <property type="taxonomic scope" value="Bacteria"/>
</dbReference>
<dbReference type="HOGENOM" id="CLU_145919_0_0_11"/>
<dbReference type="OrthoDB" id="5244617at2"/>
<dbReference type="Proteomes" id="UP000000806">
    <property type="component" value="Chromosome"/>
</dbReference>
<dbReference type="GO" id="GO:0005886">
    <property type="term" value="C:plasma membrane"/>
    <property type="evidence" value="ECO:0007669"/>
    <property type="project" value="UniProtKB-SubCell"/>
</dbReference>
<dbReference type="GO" id="GO:0004129">
    <property type="term" value="F:cytochrome-c oxidase activity"/>
    <property type="evidence" value="ECO:0007669"/>
    <property type="project" value="UniProtKB-EC"/>
</dbReference>
<dbReference type="GO" id="GO:0022900">
    <property type="term" value="P:electron transport chain"/>
    <property type="evidence" value="ECO:0007669"/>
    <property type="project" value="InterPro"/>
</dbReference>
<dbReference type="InterPro" id="IPR021050">
    <property type="entry name" value="Cyt_c_oxidase_su4_actinobac"/>
</dbReference>
<dbReference type="Pfam" id="PF12270">
    <property type="entry name" value="Cyt_c_ox_IV"/>
    <property type="match status" value="1"/>
</dbReference>
<dbReference type="PIRSF" id="PIRSF017385">
    <property type="entry name" value="CtaF"/>
    <property type="match status" value="1"/>
</dbReference>
<protein>
    <recommendedName>
        <fullName>Probable cytochrome c oxidase polypeptide 4</fullName>
        <ecNumber>7.1.1.9</ecNumber>
    </recommendedName>
    <alternativeName>
        <fullName>Cytochrome aa3 subunit 4</fullName>
    </alternativeName>
    <alternativeName>
        <fullName>Cytochrome c oxidase polypeptide IV</fullName>
    </alternativeName>
</protein>
<sequence length="139" mass="14970">MHIEARLFEFVAVFFVIMAVLYGVLTSMFATGGVDWVGTTALALTGGLALIVATFFRFVARRLDIRPEDYEGAEISDGAGELGFFSPHSWWPVLVALSGSVAAVGIALWLPWLIVAGVVFVLASAAGLVFEYYVGPEKH</sequence>
<proteinExistence type="inferred from homology"/>